<protein>
    <recommendedName>
        <fullName>Polyribonucleotide nucleotidyltransferase 2, mitochondrial</fullName>
        <shortName evidence="5">AtmtPNPase</shortName>
        <ecNumber evidence="3 4">2.7.7.8</ecNumber>
    </recommendedName>
    <alternativeName>
        <fullName>Polynucleotide phosphorylase 2</fullName>
        <shortName>PNPase 2</shortName>
    </alternativeName>
</protein>
<comment type="function">
    <text evidence="3 4">Involved in the 3'-end maturation of mitochondrial mRNAs, rRNAs and tRNAs. Functions as a poly(A) mRNA 3'-5' degrading phosphorylase and is required for the degradation of highly expressed transcripts of non-coding regions.</text>
</comment>
<comment type="catalytic activity">
    <reaction evidence="3 4">
        <text>RNA(n+1) + phosphate = RNA(n) + a ribonucleoside 5'-diphosphate</text>
        <dbReference type="Rhea" id="RHEA:22096"/>
        <dbReference type="Rhea" id="RHEA-COMP:14527"/>
        <dbReference type="Rhea" id="RHEA-COMP:17342"/>
        <dbReference type="ChEBI" id="CHEBI:43474"/>
        <dbReference type="ChEBI" id="CHEBI:57930"/>
        <dbReference type="ChEBI" id="CHEBI:140395"/>
        <dbReference type="EC" id="2.7.7.8"/>
    </reaction>
</comment>
<comment type="subcellular location">
    <subcellularLocation>
        <location evidence="3">Mitochondrion</location>
    </subcellularLocation>
</comment>
<comment type="miscellaneous">
    <text evidence="7">Plants silencing PNP2 stop growing after two to three weeks.</text>
</comment>
<comment type="similarity">
    <text evidence="6">Belongs to the polyribonucleotide nucleotidyltransferase family.</text>
</comment>
<organism>
    <name type="scientific">Arabidopsis thaliana</name>
    <name type="common">Mouse-ear cress</name>
    <dbReference type="NCBI Taxonomy" id="3702"/>
    <lineage>
        <taxon>Eukaryota</taxon>
        <taxon>Viridiplantae</taxon>
        <taxon>Streptophyta</taxon>
        <taxon>Embryophyta</taxon>
        <taxon>Tracheophyta</taxon>
        <taxon>Spermatophyta</taxon>
        <taxon>Magnoliopsida</taxon>
        <taxon>eudicotyledons</taxon>
        <taxon>Gunneridae</taxon>
        <taxon>Pentapetalae</taxon>
        <taxon>rosids</taxon>
        <taxon>malvids</taxon>
        <taxon>Brassicales</taxon>
        <taxon>Brassicaceae</taxon>
        <taxon>Camelineae</taxon>
        <taxon>Arabidopsis</taxon>
    </lineage>
</organism>
<evidence type="ECO:0000255" key="1"/>
<evidence type="ECO:0000256" key="2">
    <source>
        <dbReference type="SAM" id="MobiDB-lite"/>
    </source>
</evidence>
<evidence type="ECO:0000269" key="3">
    <source>
    </source>
</evidence>
<evidence type="ECO:0000269" key="4">
    <source>
    </source>
</evidence>
<evidence type="ECO:0000303" key="5">
    <source>
    </source>
</evidence>
<evidence type="ECO:0000305" key="6"/>
<evidence type="ECO:0000305" key="7">
    <source>
    </source>
</evidence>
<keyword id="KW-0269">Exonuclease</keyword>
<keyword id="KW-0378">Hydrolase</keyword>
<keyword id="KW-0496">Mitochondrion</keyword>
<keyword id="KW-0507">mRNA processing</keyword>
<keyword id="KW-0540">Nuclease</keyword>
<keyword id="KW-0548">Nucleotidyltransferase</keyword>
<keyword id="KW-1185">Reference proteome</keyword>
<keyword id="KW-0677">Repeat</keyword>
<keyword id="KW-0694">RNA-binding</keyword>
<keyword id="KW-0698">rRNA processing</keyword>
<keyword id="KW-0808">Transferase</keyword>
<keyword id="KW-0809">Transit peptide</keyword>
<keyword id="KW-0819">tRNA processing</keyword>
<feature type="transit peptide" description="Mitochondrion" evidence="1">
    <location>
        <begin position="1"/>
        <end position="39"/>
    </location>
</feature>
<feature type="chain" id="PRO_5001028364" description="Polyribonucleotide nucleotidyltransferase 2, mitochondrial">
    <location>
        <begin position="40"/>
        <end position="991"/>
    </location>
</feature>
<feature type="domain" description="KH">
    <location>
        <begin position="609"/>
        <end position="667"/>
    </location>
</feature>
<feature type="domain" description="S1 motif 1">
    <location>
        <begin position="678"/>
        <end position="746"/>
    </location>
</feature>
<feature type="domain" description="S1 motif 2">
    <location>
        <begin position="925"/>
        <end position="987"/>
    </location>
</feature>
<feature type="region of interest" description="Disordered" evidence="2">
    <location>
        <begin position="813"/>
        <end position="865"/>
    </location>
</feature>
<feature type="compositionally biased region" description="Basic and acidic residues" evidence="2">
    <location>
        <begin position="822"/>
        <end position="838"/>
    </location>
</feature>
<reference key="1">
    <citation type="journal article" date="2004" name="J. Biol. Chem.">
        <title>Two exoribonucleases act sequentially to process mature 3'-ends of atp9 mRNAs in Arabidopsis mitochondria.</title>
        <authorList>
            <person name="Perrin R."/>
            <person name="Meyer E.H."/>
            <person name="Zaepfel M."/>
            <person name="Kim Y.-J."/>
            <person name="Mache R."/>
            <person name="Grienenberger J.-M."/>
            <person name="Gualberto J.M."/>
            <person name="Gagliardi D."/>
        </authorList>
    </citation>
    <scope>NUCLEOTIDE SEQUENCE [GENOMIC DNA / MRNA]</scope>
    <scope>FUNCTION</scope>
    <scope>CATALYTIC ACTIVITY</scope>
    <scope>SUBCELLULAR LOCATION</scope>
    <source>
        <strain>cv. Columbia</strain>
    </source>
</reference>
<reference key="2">
    <citation type="journal article" date="2000" name="Nature">
        <title>Sequence and analysis of chromosome 5 of the plant Arabidopsis thaliana.</title>
        <authorList>
            <person name="Tabata S."/>
            <person name="Kaneko T."/>
            <person name="Nakamura Y."/>
            <person name="Kotani H."/>
            <person name="Kato T."/>
            <person name="Asamizu E."/>
            <person name="Miyajima N."/>
            <person name="Sasamoto S."/>
            <person name="Kimura T."/>
            <person name="Hosouchi T."/>
            <person name="Kawashima K."/>
            <person name="Kohara M."/>
            <person name="Matsumoto M."/>
            <person name="Matsuno A."/>
            <person name="Muraki A."/>
            <person name="Nakayama S."/>
            <person name="Nakazaki N."/>
            <person name="Naruo K."/>
            <person name="Okumura S."/>
            <person name="Shinpo S."/>
            <person name="Takeuchi C."/>
            <person name="Wada T."/>
            <person name="Watanabe A."/>
            <person name="Yamada M."/>
            <person name="Yasuda M."/>
            <person name="Sato S."/>
            <person name="de la Bastide M."/>
            <person name="Huang E."/>
            <person name="Spiegel L."/>
            <person name="Gnoj L."/>
            <person name="O'Shaughnessy A."/>
            <person name="Preston R."/>
            <person name="Habermann K."/>
            <person name="Murray J."/>
            <person name="Johnson D."/>
            <person name="Rohlfing T."/>
            <person name="Nelson J."/>
            <person name="Stoneking T."/>
            <person name="Pepin K."/>
            <person name="Spieth J."/>
            <person name="Sekhon M."/>
            <person name="Armstrong J."/>
            <person name="Becker M."/>
            <person name="Belter E."/>
            <person name="Cordum H."/>
            <person name="Cordes M."/>
            <person name="Courtney L."/>
            <person name="Courtney W."/>
            <person name="Dante M."/>
            <person name="Du H."/>
            <person name="Edwards J."/>
            <person name="Fryman J."/>
            <person name="Haakensen B."/>
            <person name="Lamar E."/>
            <person name="Latreille P."/>
            <person name="Leonard S."/>
            <person name="Meyer R."/>
            <person name="Mulvaney E."/>
            <person name="Ozersky P."/>
            <person name="Riley A."/>
            <person name="Strowmatt C."/>
            <person name="Wagner-McPherson C."/>
            <person name="Wollam A."/>
            <person name="Yoakum M."/>
            <person name="Bell M."/>
            <person name="Dedhia N."/>
            <person name="Parnell L."/>
            <person name="Shah R."/>
            <person name="Rodriguez M."/>
            <person name="Hoon See L."/>
            <person name="Vil D."/>
            <person name="Baker J."/>
            <person name="Kirchoff K."/>
            <person name="Toth K."/>
            <person name="King L."/>
            <person name="Bahret A."/>
            <person name="Miller B."/>
            <person name="Marra M.A."/>
            <person name="Martienssen R."/>
            <person name="McCombie W.R."/>
            <person name="Wilson R.K."/>
            <person name="Murphy G."/>
            <person name="Bancroft I."/>
            <person name="Volckaert G."/>
            <person name="Wambutt R."/>
            <person name="Duesterhoeft A."/>
            <person name="Stiekema W."/>
            <person name="Pohl T."/>
            <person name="Entian K.-D."/>
            <person name="Terryn N."/>
            <person name="Hartley N."/>
            <person name="Bent E."/>
            <person name="Johnson S."/>
            <person name="Langham S.-A."/>
            <person name="McCullagh B."/>
            <person name="Robben J."/>
            <person name="Grymonprez B."/>
            <person name="Zimmermann W."/>
            <person name="Ramsperger U."/>
            <person name="Wedler H."/>
            <person name="Balke K."/>
            <person name="Wedler E."/>
            <person name="Peters S."/>
            <person name="van Staveren M."/>
            <person name="Dirkse W."/>
            <person name="Mooijman P."/>
            <person name="Klein Lankhorst R."/>
            <person name="Weitzenegger T."/>
            <person name="Bothe G."/>
            <person name="Rose M."/>
            <person name="Hauf J."/>
            <person name="Berneiser S."/>
            <person name="Hempel S."/>
            <person name="Feldpausch M."/>
            <person name="Lamberth S."/>
            <person name="Villarroel R."/>
            <person name="Gielen J."/>
            <person name="Ardiles W."/>
            <person name="Bents O."/>
            <person name="Lemcke K."/>
            <person name="Kolesov G."/>
            <person name="Mayer K.F.X."/>
            <person name="Rudd S."/>
            <person name="Schoof H."/>
            <person name="Schueller C."/>
            <person name="Zaccaria P."/>
            <person name="Mewes H.-W."/>
            <person name="Bevan M."/>
            <person name="Fransz P.F."/>
        </authorList>
    </citation>
    <scope>NUCLEOTIDE SEQUENCE [LARGE SCALE GENOMIC DNA]</scope>
    <source>
        <strain>cv. Columbia</strain>
    </source>
</reference>
<reference key="3">
    <citation type="journal article" date="2017" name="Plant J.">
        <title>Araport11: a complete reannotation of the Arabidopsis thaliana reference genome.</title>
        <authorList>
            <person name="Cheng C.Y."/>
            <person name="Krishnakumar V."/>
            <person name="Chan A.P."/>
            <person name="Thibaud-Nissen F."/>
            <person name="Schobel S."/>
            <person name="Town C.D."/>
        </authorList>
    </citation>
    <scope>GENOME REANNOTATION</scope>
    <source>
        <strain>cv. Columbia</strain>
    </source>
</reference>
<reference key="4">
    <citation type="journal article" date="2006" name="Mol. Cell. Biol.">
        <title>Relaxed transcription in Arabidopsis mitochondria is counterbalanced by RNA stability control mediated by polyadenylation and polynucleotide phosphorylase.</title>
        <authorList>
            <person name="Holec S."/>
            <person name="Lange H."/>
            <person name="Kuehn K."/>
            <person name="Alioua M."/>
            <person name="Boerner T."/>
            <person name="Gagliardi D."/>
        </authorList>
    </citation>
    <scope>FUNCTION</scope>
    <scope>CATALYTIC ACTIVITY</scope>
</reference>
<accession>Q9S7G6</accession>
<sequence length="991" mass="107772">MSSIVNRASSASLPNFLAWRALGFRTICSGRLGFAPSVPDSPVSAGTKILESFKEEFEVGSRVVSFETGKIARFANGSVVLGMDETKVLSTVTCAKTDSPRDFLPLTVDYQEKQYAQGLIPNTYMRREGAPKERELLCGRLIDRPIRPLFPTGFYHEVQIMASVLSSDGKQDPDILAANASSAALMLSDVPWGGPIGVIRIGRICGQFVVNPTMDELSSSDLNLIYACTRDKTMMIDVQSREISEKDLAAALRLAHPEAVKYLDPQIRLAEKAGKQKKEYKLSMLSDKTLEKVADLAATRIESVFTDPSYGKFERGEALDNIGKDVRKVFEEEGDQESLSILPKAVDTVRKKVVRSRMISDGFRVDGRHVDEVRPIYCESHYLPALHGSALFSRGDTQVLCTVTLGAPAEAQSLDSLVGPPKKRFMLHYSFPPYCTNEVGKRGGLNRREVGHGTLAEKALLAVLPPEEAFPYTIRINSEVMSSDGSTSMASVCGGSMALMDAGIPLRAHVAGVSVGLITDVDPSSGEIKDYRIVTDILGLEDHLGDMDFKIAGTRDGVTAIQLDIKPAGIPLDIVCESLENAREARLQILDHMERNINSPRGQDGAYSPRLATLKYSNDSLRTLIGPMGVLKRKIEVETGARLSIDNGTLTIVAKNQDVMEKAQEQVDFIIGRELVVGGVYKGTVSSIKEYGAFVEFPGGQQGLLHMSELSHEPVSKVSDVLDIGQCITTMCIETDVRGNIKLSRKALLPKPKRKPASDAGKDPVMKESSTVYIENSSVGEIVASMPSIVTPLQKSRLSVPAVVIRTAVECNEAEKSSPVNDNDKPRRAATSKPDRKPKSTASKLIATQKEEEALESIAPEETSAECGEILKQDGKLKSVSPKNNSTASNLVSFSKAKKSTMKENLSENKAEESASVSTRKLKIGTEMTATVDHVRALGLVLDLGGEIRGMYIFQGDKDKFKKGDTLRVKCTSFNTKGVPVMALVDEEGEE</sequence>
<gene>
    <name type="primary">PNP2</name>
    <name type="ordered locus">At5g14580</name>
    <name type="ORF">T15N1.70</name>
</gene>
<name>PNP2_ARATH</name>
<proteinExistence type="evidence at protein level"/>
<dbReference type="EC" id="2.7.7.8" evidence="3 4"/>
<dbReference type="EMBL" id="Y14685">
    <property type="protein sequence ID" value="CAB43864.1"/>
    <property type="molecule type" value="mRNA"/>
</dbReference>
<dbReference type="EMBL" id="Y14686">
    <property type="protein sequence ID" value="CAB43865.1"/>
    <property type="molecule type" value="Genomic_DNA"/>
</dbReference>
<dbReference type="EMBL" id="AL163792">
    <property type="protein sequence ID" value="CAB87625.1"/>
    <property type="molecule type" value="Genomic_DNA"/>
</dbReference>
<dbReference type="EMBL" id="CP002688">
    <property type="protein sequence ID" value="AED92050.1"/>
    <property type="molecule type" value="Genomic_DNA"/>
</dbReference>
<dbReference type="PIR" id="T48631">
    <property type="entry name" value="T48631"/>
</dbReference>
<dbReference type="RefSeq" id="NP_196962.1">
    <property type="nucleotide sequence ID" value="NM_121462.4"/>
</dbReference>
<dbReference type="SMR" id="Q9S7G6"/>
<dbReference type="FunCoup" id="Q9S7G6">
    <property type="interactions" value="3362"/>
</dbReference>
<dbReference type="IntAct" id="Q9S7G6">
    <property type="interactions" value="1"/>
</dbReference>
<dbReference type="STRING" id="3702.Q9S7G6"/>
<dbReference type="PaxDb" id="3702-AT5G14580.1"/>
<dbReference type="ProteomicsDB" id="249435"/>
<dbReference type="EnsemblPlants" id="AT5G14580.1">
    <property type="protein sequence ID" value="AT5G14580.1"/>
    <property type="gene ID" value="AT5G14580"/>
</dbReference>
<dbReference type="GeneID" id="831309"/>
<dbReference type="Gramene" id="AT5G14580.1">
    <property type="protein sequence ID" value="AT5G14580.1"/>
    <property type="gene ID" value="AT5G14580"/>
</dbReference>
<dbReference type="KEGG" id="ath:AT5G14580"/>
<dbReference type="Araport" id="AT5G14580"/>
<dbReference type="TAIR" id="AT5G14580"/>
<dbReference type="eggNOG" id="KOG1067">
    <property type="taxonomic scope" value="Eukaryota"/>
</dbReference>
<dbReference type="HOGENOM" id="CLU_004217_4_1_1"/>
<dbReference type="InParanoid" id="Q9S7G6"/>
<dbReference type="OMA" id="YQIRAHG"/>
<dbReference type="OrthoDB" id="437922at2759"/>
<dbReference type="PhylomeDB" id="Q9S7G6"/>
<dbReference type="PRO" id="PR:Q9S7G6"/>
<dbReference type="Proteomes" id="UP000006548">
    <property type="component" value="Chromosome 5"/>
</dbReference>
<dbReference type="ExpressionAtlas" id="Q9S7G6">
    <property type="expression patterns" value="baseline and differential"/>
</dbReference>
<dbReference type="GO" id="GO:0005739">
    <property type="term" value="C:mitochondrion"/>
    <property type="evidence" value="ECO:0007669"/>
    <property type="project" value="UniProtKB-SubCell"/>
</dbReference>
<dbReference type="GO" id="GO:0000175">
    <property type="term" value="F:3'-5'-RNA exonuclease activity"/>
    <property type="evidence" value="ECO:0000315"/>
    <property type="project" value="UniProtKB"/>
</dbReference>
<dbReference type="GO" id="GO:0004654">
    <property type="term" value="F:polyribonucleotide nucleotidyltransferase activity"/>
    <property type="evidence" value="ECO:0000315"/>
    <property type="project" value="UniProtKB"/>
</dbReference>
<dbReference type="GO" id="GO:0003723">
    <property type="term" value="F:RNA binding"/>
    <property type="evidence" value="ECO:0007669"/>
    <property type="project" value="UniProtKB-KW"/>
</dbReference>
<dbReference type="GO" id="GO:0000957">
    <property type="term" value="P:mitochondrial RNA catabolic process"/>
    <property type="evidence" value="ECO:0000315"/>
    <property type="project" value="UniProtKB"/>
</dbReference>
<dbReference type="GO" id="GO:0000963">
    <property type="term" value="P:mitochondrial RNA processing"/>
    <property type="evidence" value="ECO:0000315"/>
    <property type="project" value="UniProtKB"/>
</dbReference>
<dbReference type="GO" id="GO:0006402">
    <property type="term" value="P:mRNA catabolic process"/>
    <property type="evidence" value="ECO:0007669"/>
    <property type="project" value="InterPro"/>
</dbReference>
<dbReference type="GO" id="GO:0006397">
    <property type="term" value="P:mRNA processing"/>
    <property type="evidence" value="ECO:0007669"/>
    <property type="project" value="UniProtKB-KW"/>
</dbReference>
<dbReference type="GO" id="GO:0006364">
    <property type="term" value="P:rRNA processing"/>
    <property type="evidence" value="ECO:0007669"/>
    <property type="project" value="UniProtKB-KW"/>
</dbReference>
<dbReference type="GO" id="GO:0008033">
    <property type="term" value="P:tRNA processing"/>
    <property type="evidence" value="ECO:0007669"/>
    <property type="project" value="UniProtKB-KW"/>
</dbReference>
<dbReference type="CDD" id="cd02393">
    <property type="entry name" value="KH-I_PNPase"/>
    <property type="match status" value="1"/>
</dbReference>
<dbReference type="CDD" id="cd11363">
    <property type="entry name" value="RNase_PH_PNPase_1"/>
    <property type="match status" value="1"/>
</dbReference>
<dbReference type="CDD" id="cd11364">
    <property type="entry name" value="RNase_PH_PNPase_2"/>
    <property type="match status" value="1"/>
</dbReference>
<dbReference type="CDD" id="cd04472">
    <property type="entry name" value="S1_PNPase"/>
    <property type="match status" value="1"/>
</dbReference>
<dbReference type="FunFam" id="3.30.1370.10:FF:000001">
    <property type="entry name" value="Polyribonucleotide nucleotidyltransferase"/>
    <property type="match status" value="1"/>
</dbReference>
<dbReference type="FunFam" id="3.30.230.70:FF:000001">
    <property type="entry name" value="Polyribonucleotide nucleotidyltransferase"/>
    <property type="match status" value="1"/>
</dbReference>
<dbReference type="FunFam" id="3.30.230.70:FF:000020">
    <property type="entry name" value="Polyribonucleotide nucleotidyltransferase 2 mitochondrial"/>
    <property type="match status" value="1"/>
</dbReference>
<dbReference type="FunFam" id="2.40.50.140:FF:000189">
    <property type="entry name" value="Polyribonucleotide nucleotidyltransferase, putative"/>
    <property type="match status" value="1"/>
</dbReference>
<dbReference type="Gene3D" id="3.30.230.70">
    <property type="entry name" value="GHMP Kinase, N-terminal domain"/>
    <property type="match status" value="2"/>
</dbReference>
<dbReference type="Gene3D" id="3.30.1370.10">
    <property type="entry name" value="K Homology domain, type 1"/>
    <property type="match status" value="1"/>
</dbReference>
<dbReference type="Gene3D" id="2.40.50.140">
    <property type="entry name" value="Nucleic acid-binding proteins"/>
    <property type="match status" value="1"/>
</dbReference>
<dbReference type="HAMAP" id="MF_01595">
    <property type="entry name" value="PNPase"/>
    <property type="match status" value="1"/>
</dbReference>
<dbReference type="InterPro" id="IPR001247">
    <property type="entry name" value="ExoRNase_PH_dom1"/>
</dbReference>
<dbReference type="InterPro" id="IPR015847">
    <property type="entry name" value="ExoRNase_PH_dom2"/>
</dbReference>
<dbReference type="InterPro" id="IPR036345">
    <property type="entry name" value="ExoRNase_PH_dom2_sf"/>
</dbReference>
<dbReference type="InterPro" id="IPR036612">
    <property type="entry name" value="KH_dom_type_1_sf"/>
</dbReference>
<dbReference type="InterPro" id="IPR012340">
    <property type="entry name" value="NA-bd_OB-fold"/>
</dbReference>
<dbReference type="InterPro" id="IPR012162">
    <property type="entry name" value="PNPase"/>
</dbReference>
<dbReference type="InterPro" id="IPR027408">
    <property type="entry name" value="PNPase/RNase_PH_dom_sf"/>
</dbReference>
<dbReference type="InterPro" id="IPR015848">
    <property type="entry name" value="PNPase_PH_RNA-bd_bac/org-type"/>
</dbReference>
<dbReference type="InterPro" id="IPR020568">
    <property type="entry name" value="Ribosomal_Su5_D2-typ_SF"/>
</dbReference>
<dbReference type="InterPro" id="IPR003029">
    <property type="entry name" value="S1_domain"/>
</dbReference>
<dbReference type="NCBIfam" id="TIGR03591">
    <property type="entry name" value="polynuc_phos"/>
    <property type="match status" value="1"/>
</dbReference>
<dbReference type="NCBIfam" id="NF008805">
    <property type="entry name" value="PRK11824.1"/>
    <property type="match status" value="1"/>
</dbReference>
<dbReference type="PANTHER" id="PTHR11252">
    <property type="entry name" value="POLYRIBONUCLEOTIDE NUCLEOTIDYLTRANSFERASE"/>
    <property type="match status" value="1"/>
</dbReference>
<dbReference type="PANTHER" id="PTHR11252:SF16">
    <property type="entry name" value="POLYRIBONUCLEOTIDE NUCLEOTIDYLTRANSFERASE 2, MITOCHONDRIAL"/>
    <property type="match status" value="1"/>
</dbReference>
<dbReference type="Pfam" id="PF03726">
    <property type="entry name" value="PNPase"/>
    <property type="match status" value="1"/>
</dbReference>
<dbReference type="Pfam" id="PF01138">
    <property type="entry name" value="RNase_PH"/>
    <property type="match status" value="2"/>
</dbReference>
<dbReference type="Pfam" id="PF03725">
    <property type="entry name" value="RNase_PH_C"/>
    <property type="match status" value="2"/>
</dbReference>
<dbReference type="Pfam" id="PF00575">
    <property type="entry name" value="S1"/>
    <property type="match status" value="1"/>
</dbReference>
<dbReference type="SMART" id="SM00316">
    <property type="entry name" value="S1"/>
    <property type="match status" value="2"/>
</dbReference>
<dbReference type="SUPFAM" id="SSF54791">
    <property type="entry name" value="Eukaryotic type KH-domain (KH-domain type I)"/>
    <property type="match status" value="1"/>
</dbReference>
<dbReference type="SUPFAM" id="SSF50249">
    <property type="entry name" value="Nucleic acid-binding proteins"/>
    <property type="match status" value="1"/>
</dbReference>
<dbReference type="SUPFAM" id="SSF55666">
    <property type="entry name" value="Ribonuclease PH domain 2-like"/>
    <property type="match status" value="2"/>
</dbReference>
<dbReference type="SUPFAM" id="SSF54211">
    <property type="entry name" value="Ribosomal protein S5 domain 2-like"/>
    <property type="match status" value="2"/>
</dbReference>
<dbReference type="PROSITE" id="PS50126">
    <property type="entry name" value="S1"/>
    <property type="match status" value="1"/>
</dbReference>